<protein>
    <recommendedName>
        <fullName evidence="19">G1/S-specific cyclin-D3</fullName>
    </recommendedName>
</protein>
<sequence length="292" mass="32520">MELLCCEGTRHAPRAGPDPRLLGDQRVLQSLLRLEERYVPRASYFQCVQREIKPHMRKMLAYWMLEVCEEQRCEEEVFPLAMNYLDRYLSCVPTRKAQLQLLGAVCMLLASKLRETTPLTIEKLCIYTDHAVSPRQLRDWEVLVLGKLKWDLAAVIAHDFLAFILHRLSLPRDRQALVKKHAQTFLALCATDYTFAMYPPSMIATGSIGAAVQGLGACSMSGDELTELLAGITGTEVDCLRACQEQIEAALRESLREASQTSSSPAPKAPRGSSSQGPSQTSTPTDVTAIHL</sequence>
<comment type="function">
    <text evidence="7 8 13">Regulatory component of the cyclin D3-CDK4 (DC) complex that phosphorylates and inhibits members of the retinoblastoma (RB) protein family including RB1 and regulates the cell-cycle during G(1)/S transition (PubMed:8114739). Phosphorylation of RB1 allows dissociation of the transcription factor E2F from the RB/E2F complex and the subsequent transcription of E2F target genes which are responsible for the progression through the G(1) phase (PubMed:8114739). Hypophosphorylates RB1 in early G(1) phase (PubMed:8114739). Cyclin D-CDK4 complexes are major integrators of various mitogenenic and antimitogenic signals (PubMed:8114739). Component of the ternary complex, cyclin D3/CDK4/CDKN1B, required for nuclear translocation and activity of the cyclin D-CDK4 complex (PubMed:16782892). Shows transcriptional coactivator activity with ATF5 independently of CDK4 (PubMed:15358120).</text>
</comment>
<comment type="subunit">
    <text evidence="6 7 8 9 13 14">Interacts with the CDK4 and CDK6 protein kinases to form a serine/threonine kinase holoenzyme complex (PubMed:19237555, PubMed:8114739, PubMed:9106657). The cyclin subunit imparts substrate specificity to the complex (PubMed:8114739). Interacts with ATF5 (PubMed:15358120). Interacts with EIF3K (PubMed:15327989). Component of the ternary complex cyclin D/CDK4/CDKN1B required for nuclear translocation and modulation of CDK4-mediated kinase activity (PubMed:16782892). Can form similar complexes with either CDKN1A or CDKN2A (PubMed:16782892, PubMed:9106657).</text>
</comment>
<comment type="interaction">
    <interactant intactId="EBI-375013">
        <id>P30281</id>
    </interactant>
    <interactant intactId="EBI-725606">
        <id>Q9NWQ9</id>
        <label>C14orf119</label>
    </interactant>
    <organismsDiffer>false</organismsDiffer>
    <experiments>3</experiments>
</comment>
<comment type="interaction">
    <interactant intactId="EBI-375013">
        <id>P30281</id>
    </interactant>
    <interactant intactId="EBI-10961312">
        <id>Q8IYE1</id>
        <label>CCDC13</label>
    </interactant>
    <organismsDiffer>false</organismsDiffer>
    <experiments>3</experiments>
</comment>
<comment type="interaction">
    <interactant intactId="EBI-375013">
        <id>P30281</id>
    </interactant>
    <interactant intactId="EBI-1043945">
        <id>O94921</id>
        <label>CDK14</label>
    </interactant>
    <organismsDiffer>false</organismsDiffer>
    <experiments>5</experiments>
</comment>
<comment type="interaction">
    <interactant intactId="EBI-375013">
        <id>P30281</id>
    </interactant>
    <interactant intactId="EBI-12401765">
        <id>Q00536-3</id>
        <label>CDK16</label>
    </interactant>
    <organismsDiffer>false</organismsDiffer>
    <experiments>3</experiments>
</comment>
<comment type="interaction">
    <interactant intactId="EBI-375013">
        <id>P30281</id>
    </interactant>
    <interactant intactId="EBI-746238">
        <id>Q07002</id>
        <label>CDK18</label>
    </interactant>
    <organismsDiffer>false</organismsDiffer>
    <experiments>3</experiments>
</comment>
<comment type="interaction">
    <interactant intactId="EBI-375013">
        <id>P30281</id>
    </interactant>
    <interactant intactId="EBI-1245761">
        <id>Q00526</id>
        <label>CDK3</label>
    </interactant>
    <organismsDiffer>false</organismsDiffer>
    <experiments>5</experiments>
</comment>
<comment type="interaction">
    <interactant intactId="EBI-375013">
        <id>P30281</id>
    </interactant>
    <interactant intactId="EBI-295644">
        <id>P11802</id>
        <label>CDK4</label>
    </interactant>
    <organismsDiffer>false</organismsDiffer>
    <experiments>40</experiments>
</comment>
<comment type="interaction">
    <interactant intactId="EBI-375013">
        <id>P30281</id>
    </interactant>
    <interactant intactId="EBI-1041567">
        <id>Q00535</id>
        <label>CDK5</label>
    </interactant>
    <organismsDiffer>false</organismsDiffer>
    <experiments>12</experiments>
</comment>
<comment type="interaction">
    <interactant intactId="EBI-375013">
        <id>P30281</id>
    </interactant>
    <interactant intactId="EBI-295663">
        <id>Q00534</id>
        <label>CDK6</label>
    </interactant>
    <organismsDiffer>false</organismsDiffer>
    <experiments>34</experiments>
</comment>
<comment type="interaction">
    <interactant intactId="EBI-375013">
        <id>P30281</id>
    </interactant>
    <interactant intactId="EBI-375077">
        <id>P38936</id>
        <label>CDKN1A</label>
    </interactant>
    <organismsDiffer>false</organismsDiffer>
    <experiments>29</experiments>
</comment>
<comment type="interaction">
    <interactant intactId="EBI-375013">
        <id>P30281</id>
    </interactant>
    <interactant intactId="EBI-519280">
        <id>P46527</id>
        <label>CDKN1B</label>
    </interactant>
    <organismsDiffer>false</organismsDiffer>
    <experiments>9</experiments>
</comment>
<comment type="interaction">
    <interactant intactId="EBI-375013">
        <id>P30281</id>
    </interactant>
    <interactant intactId="EBI-745859">
        <id>P55273</id>
        <label>CDKN2D</label>
    </interactant>
    <organismsDiffer>false</organismsDiffer>
    <experiments>3</experiments>
</comment>
<comment type="interaction">
    <interactant intactId="EBI-375013">
        <id>P30281</id>
    </interactant>
    <interactant intactId="EBI-10204806">
        <id>P29373</id>
        <label>CRABP2</label>
    </interactant>
    <organismsDiffer>false</organismsDiffer>
    <experiments>3</experiments>
</comment>
<comment type="interaction">
    <interactant intactId="EBI-375013">
        <id>P30281</id>
    </interactant>
    <interactant intactId="EBI-740220">
        <id>O14964</id>
        <label>HGS</label>
    </interactant>
    <organismsDiffer>false</organismsDiffer>
    <experiments>3</experiments>
</comment>
<comment type="interaction">
    <interactant intactId="EBI-375013">
        <id>P30281</id>
    </interactant>
    <interactant intactId="EBI-14069005">
        <id>Q9BVG8-5</id>
        <label>KIFC3</label>
    </interactant>
    <organismsDiffer>false</organismsDiffer>
    <experiments>3</experiments>
</comment>
<comment type="interaction">
    <interactant intactId="EBI-375013">
        <id>P30281</id>
    </interactant>
    <interactant intactId="EBI-743811">
        <id>Q8NEH6</id>
        <label>MNS1</label>
    </interactant>
    <organismsDiffer>false</organismsDiffer>
    <experiments>3</experiments>
</comment>
<comment type="interaction">
    <interactant intactId="EBI-375013">
        <id>P30281</id>
    </interactant>
    <interactant intactId="EBI-2855862">
        <id>Q9BT43</id>
        <label>POLR3GL</label>
    </interactant>
    <organismsDiffer>false</organismsDiffer>
    <experiments>9</experiments>
</comment>
<comment type="interaction">
    <interactant intactId="EBI-375013">
        <id>P30281</id>
    </interactant>
    <interactant intactId="EBI-1105213">
        <id>Q9UBB9</id>
        <label>TFIP11</label>
    </interactant>
    <organismsDiffer>false</organismsDiffer>
    <experiments>5</experiments>
</comment>
<comment type="interaction">
    <interactant intactId="EBI-375013">
        <id>P30281</id>
    </interactant>
    <interactant intactId="EBI-11601938">
        <id>Q5VK71</id>
        <label>AKAP8</label>
    </interactant>
    <organismsDiffer>true</organismsDiffer>
    <experiments>6</experiments>
</comment>
<comment type="interaction">
    <interactant intactId="EBI-375013">
        <id>P30281</id>
    </interactant>
    <interactant intactId="EBI-6148881">
        <id>P08393</id>
        <label>ICP0</label>
    </interactant>
    <organismsDiffer>true</organismsDiffer>
    <experiments>3</experiments>
</comment>
<comment type="subcellular location">
    <subcellularLocation>
        <location evidence="7">Nucleus</location>
    </subcellularLocation>
    <subcellularLocation>
        <location evidence="7">Cytoplasm</location>
    </subcellularLocation>
</comment>
<comment type="alternative products">
    <event type="alternative splicing"/>
    <isoform>
        <id>P30281-1</id>
        <name>1</name>
        <sequence type="displayed"/>
    </isoform>
    <isoform>
        <id>P30281-2</id>
        <name>2</name>
        <sequence type="described" ref="VSP_042649"/>
    </isoform>
    <isoform>
        <id>P30281-3</id>
        <name>3</name>
        <sequence type="described" ref="VSP_046267"/>
    </isoform>
    <isoform>
        <id>P30281-4</id>
        <name>4</name>
        <sequence type="described" ref="VSP_046266"/>
    </isoform>
</comment>
<comment type="PTM">
    <text evidence="1">Phosphorylation at Thr-283 by MAP kinases is required for ubiquitination and degradation by the DCX(AMBRA1) complex.</text>
</comment>
<comment type="PTM">
    <text evidence="10 11 12">Ubiquitinated by the DCX(AMBRA1) complex during the transition from G1 to S cell phase, leading to its degradation: ubiquitination is dependent on Thr-283 phosphorylation (PubMed:33854235, PubMed:33854239). The DCX(AMBRA1) complex represents the major regulator of CCND3 stability during the G1/S transition (PubMed:33854235, PubMed:33854239). Polyubiquitinated by the SCF(FBXL2) complex, leading to proteasomal degradation (PubMed:22020328).</text>
</comment>
<comment type="similarity">
    <text evidence="22">Belongs to the cyclin family. Cyclin D subfamily.</text>
</comment>
<reference key="1">
    <citation type="journal article" date="1992" name="Genomics">
        <title>Molecular cloning and chromosomal mapping of CCND genes encoding human D-type cyclins.</title>
        <authorList>
            <person name="Xiong Y."/>
            <person name="Menninger J."/>
            <person name="Beach D."/>
            <person name="Ward D.C."/>
        </authorList>
    </citation>
    <scope>NUCLEOTIDE SEQUENCE [MRNA] (ISOFORM 1)</scope>
    <scope>VARIANT ALA-259</scope>
</reference>
<reference key="2">
    <citation type="journal article" date="1992" name="J. Biol. Chem.">
        <title>Cloning and characterization of human cyclin D3, a cDNA closely related in sequence to the PRAD1/cyclin D1 proto-oncogene.</title>
        <authorList>
            <person name="Motokura T."/>
            <person name="Keyomarsi K."/>
            <person name="Kronenberg H.M."/>
            <person name="Arnold A."/>
        </authorList>
    </citation>
    <scope>NUCLEOTIDE SEQUENCE [MRNA] (ISOFORM 1)</scope>
</reference>
<reference key="3">
    <citation type="submission" date="2002-06" db="EMBL/GenBank/DDBJ databases">
        <authorList>
            <consortium name="NIEHS SNPs program"/>
        </authorList>
    </citation>
    <scope>NUCLEOTIDE SEQUENCE [GENOMIC DNA]</scope>
    <scope>VARIANT ALA-259</scope>
</reference>
<reference key="4">
    <citation type="submission" date="2003-04" db="EMBL/GenBank/DDBJ databases">
        <title>Full-length cDNA libraries and normalization.</title>
        <authorList>
            <person name="Li W.B."/>
            <person name="Gruber C."/>
            <person name="Jessee J."/>
            <person name="Polayes D."/>
        </authorList>
    </citation>
    <scope>NUCLEOTIDE SEQUENCE [LARGE SCALE MRNA] (ISOFORM 3)</scope>
    <scope>VARIANT ALA-259</scope>
    <source>
        <tissue>Cervix carcinoma</tissue>
    </source>
</reference>
<reference key="5">
    <citation type="journal article" date="2004" name="Nat. Genet.">
        <title>Complete sequencing and characterization of 21,243 full-length human cDNAs.</title>
        <authorList>
            <person name="Ota T."/>
            <person name="Suzuki Y."/>
            <person name="Nishikawa T."/>
            <person name="Otsuki T."/>
            <person name="Sugiyama T."/>
            <person name="Irie R."/>
            <person name="Wakamatsu A."/>
            <person name="Hayashi K."/>
            <person name="Sato H."/>
            <person name="Nagai K."/>
            <person name="Kimura K."/>
            <person name="Makita H."/>
            <person name="Sekine M."/>
            <person name="Obayashi M."/>
            <person name="Nishi T."/>
            <person name="Shibahara T."/>
            <person name="Tanaka T."/>
            <person name="Ishii S."/>
            <person name="Yamamoto J."/>
            <person name="Saito K."/>
            <person name="Kawai Y."/>
            <person name="Isono Y."/>
            <person name="Nakamura Y."/>
            <person name="Nagahari K."/>
            <person name="Murakami K."/>
            <person name="Yasuda T."/>
            <person name="Iwayanagi T."/>
            <person name="Wagatsuma M."/>
            <person name="Shiratori A."/>
            <person name="Sudo H."/>
            <person name="Hosoiri T."/>
            <person name="Kaku Y."/>
            <person name="Kodaira H."/>
            <person name="Kondo H."/>
            <person name="Sugawara M."/>
            <person name="Takahashi M."/>
            <person name="Kanda K."/>
            <person name="Yokoi T."/>
            <person name="Furuya T."/>
            <person name="Kikkawa E."/>
            <person name="Omura Y."/>
            <person name="Abe K."/>
            <person name="Kamihara K."/>
            <person name="Katsuta N."/>
            <person name="Sato K."/>
            <person name="Tanikawa M."/>
            <person name="Yamazaki M."/>
            <person name="Ninomiya K."/>
            <person name="Ishibashi T."/>
            <person name="Yamashita H."/>
            <person name="Murakawa K."/>
            <person name="Fujimori K."/>
            <person name="Tanai H."/>
            <person name="Kimata M."/>
            <person name="Watanabe M."/>
            <person name="Hiraoka S."/>
            <person name="Chiba Y."/>
            <person name="Ishida S."/>
            <person name="Ono Y."/>
            <person name="Takiguchi S."/>
            <person name="Watanabe S."/>
            <person name="Yosida M."/>
            <person name="Hotuta T."/>
            <person name="Kusano J."/>
            <person name="Kanehori K."/>
            <person name="Takahashi-Fujii A."/>
            <person name="Hara H."/>
            <person name="Tanase T.-O."/>
            <person name="Nomura Y."/>
            <person name="Togiya S."/>
            <person name="Komai F."/>
            <person name="Hara R."/>
            <person name="Takeuchi K."/>
            <person name="Arita M."/>
            <person name="Imose N."/>
            <person name="Musashino K."/>
            <person name="Yuuki H."/>
            <person name="Oshima A."/>
            <person name="Sasaki N."/>
            <person name="Aotsuka S."/>
            <person name="Yoshikawa Y."/>
            <person name="Matsunawa H."/>
            <person name="Ichihara T."/>
            <person name="Shiohata N."/>
            <person name="Sano S."/>
            <person name="Moriya S."/>
            <person name="Momiyama H."/>
            <person name="Satoh N."/>
            <person name="Takami S."/>
            <person name="Terashima Y."/>
            <person name="Suzuki O."/>
            <person name="Nakagawa S."/>
            <person name="Senoh A."/>
            <person name="Mizoguchi H."/>
            <person name="Goto Y."/>
            <person name="Shimizu F."/>
            <person name="Wakebe H."/>
            <person name="Hishigaki H."/>
            <person name="Watanabe T."/>
            <person name="Sugiyama A."/>
            <person name="Takemoto M."/>
            <person name="Kawakami B."/>
            <person name="Yamazaki M."/>
            <person name="Watanabe K."/>
            <person name="Kumagai A."/>
            <person name="Itakura S."/>
            <person name="Fukuzumi Y."/>
            <person name="Fujimori Y."/>
            <person name="Komiyama M."/>
            <person name="Tashiro H."/>
            <person name="Tanigami A."/>
            <person name="Fujiwara T."/>
            <person name="Ono T."/>
            <person name="Yamada K."/>
            <person name="Fujii Y."/>
            <person name="Ozaki K."/>
            <person name="Hirao M."/>
            <person name="Ohmori Y."/>
            <person name="Kawabata A."/>
            <person name="Hikiji T."/>
            <person name="Kobatake N."/>
            <person name="Inagaki H."/>
            <person name="Ikema Y."/>
            <person name="Okamoto S."/>
            <person name="Okitani R."/>
            <person name="Kawakami T."/>
            <person name="Noguchi S."/>
            <person name="Itoh T."/>
            <person name="Shigeta K."/>
            <person name="Senba T."/>
            <person name="Matsumura K."/>
            <person name="Nakajima Y."/>
            <person name="Mizuno T."/>
            <person name="Morinaga M."/>
            <person name="Sasaki M."/>
            <person name="Togashi T."/>
            <person name="Oyama M."/>
            <person name="Hata H."/>
            <person name="Watanabe M."/>
            <person name="Komatsu T."/>
            <person name="Mizushima-Sugano J."/>
            <person name="Satoh T."/>
            <person name="Shirai Y."/>
            <person name="Takahashi Y."/>
            <person name="Nakagawa K."/>
            <person name="Okumura K."/>
            <person name="Nagase T."/>
            <person name="Nomura N."/>
            <person name="Kikuchi H."/>
            <person name="Masuho Y."/>
            <person name="Yamashita R."/>
            <person name="Nakai K."/>
            <person name="Yada T."/>
            <person name="Nakamura Y."/>
            <person name="Ohara O."/>
            <person name="Isogai T."/>
            <person name="Sugano S."/>
        </authorList>
    </citation>
    <scope>NUCLEOTIDE SEQUENCE [LARGE SCALE MRNA] (ISOFORMS 1; 2 AND 4)</scope>
    <scope>VARIANT ALA-259</scope>
    <source>
        <tissue>Synovium</tissue>
        <tissue>Thymus</tissue>
        <tissue>Umbilical cord blood</tissue>
    </source>
</reference>
<reference key="6">
    <citation type="submission" date="2004-06" db="EMBL/GenBank/DDBJ databases">
        <title>Cloning of human full open reading frames in Gateway(TM) system entry vector (pDONR201).</title>
        <authorList>
            <person name="Ebert L."/>
            <person name="Schick M."/>
            <person name="Neubert P."/>
            <person name="Schatten R."/>
            <person name="Henze S."/>
            <person name="Korn B."/>
        </authorList>
    </citation>
    <scope>NUCLEOTIDE SEQUENCE [LARGE SCALE MRNA] (ISOFORM 1)</scope>
    <scope>VARIANT ALA-259</scope>
</reference>
<reference key="7">
    <citation type="journal article" date="2003" name="Nature">
        <title>The DNA sequence and analysis of human chromosome 6.</title>
        <authorList>
            <person name="Mungall A.J."/>
            <person name="Palmer S.A."/>
            <person name="Sims S.K."/>
            <person name="Edwards C.A."/>
            <person name="Ashurst J.L."/>
            <person name="Wilming L."/>
            <person name="Jones M.C."/>
            <person name="Horton R."/>
            <person name="Hunt S.E."/>
            <person name="Scott C.E."/>
            <person name="Gilbert J.G.R."/>
            <person name="Clamp M.E."/>
            <person name="Bethel G."/>
            <person name="Milne S."/>
            <person name="Ainscough R."/>
            <person name="Almeida J.P."/>
            <person name="Ambrose K.D."/>
            <person name="Andrews T.D."/>
            <person name="Ashwell R.I.S."/>
            <person name="Babbage A.K."/>
            <person name="Bagguley C.L."/>
            <person name="Bailey J."/>
            <person name="Banerjee R."/>
            <person name="Barker D.J."/>
            <person name="Barlow K.F."/>
            <person name="Bates K."/>
            <person name="Beare D.M."/>
            <person name="Beasley H."/>
            <person name="Beasley O."/>
            <person name="Bird C.P."/>
            <person name="Blakey S.E."/>
            <person name="Bray-Allen S."/>
            <person name="Brook J."/>
            <person name="Brown A.J."/>
            <person name="Brown J.Y."/>
            <person name="Burford D.C."/>
            <person name="Burrill W."/>
            <person name="Burton J."/>
            <person name="Carder C."/>
            <person name="Carter N.P."/>
            <person name="Chapman J.C."/>
            <person name="Clark S.Y."/>
            <person name="Clark G."/>
            <person name="Clee C.M."/>
            <person name="Clegg S."/>
            <person name="Cobley V."/>
            <person name="Collier R.E."/>
            <person name="Collins J.E."/>
            <person name="Colman L.K."/>
            <person name="Corby N.R."/>
            <person name="Coville G.J."/>
            <person name="Culley K.M."/>
            <person name="Dhami P."/>
            <person name="Davies J."/>
            <person name="Dunn M."/>
            <person name="Earthrowl M.E."/>
            <person name="Ellington A.E."/>
            <person name="Evans K.A."/>
            <person name="Faulkner L."/>
            <person name="Francis M.D."/>
            <person name="Frankish A."/>
            <person name="Frankland J."/>
            <person name="French L."/>
            <person name="Garner P."/>
            <person name="Garnett J."/>
            <person name="Ghori M.J."/>
            <person name="Gilby L.M."/>
            <person name="Gillson C.J."/>
            <person name="Glithero R.J."/>
            <person name="Grafham D.V."/>
            <person name="Grant M."/>
            <person name="Gribble S."/>
            <person name="Griffiths C."/>
            <person name="Griffiths M.N.D."/>
            <person name="Hall R."/>
            <person name="Halls K.S."/>
            <person name="Hammond S."/>
            <person name="Harley J.L."/>
            <person name="Hart E.A."/>
            <person name="Heath P.D."/>
            <person name="Heathcott R."/>
            <person name="Holmes S.J."/>
            <person name="Howden P.J."/>
            <person name="Howe K.L."/>
            <person name="Howell G.R."/>
            <person name="Huckle E."/>
            <person name="Humphray S.J."/>
            <person name="Humphries M.D."/>
            <person name="Hunt A.R."/>
            <person name="Johnson C.M."/>
            <person name="Joy A.A."/>
            <person name="Kay M."/>
            <person name="Keenan S.J."/>
            <person name="Kimberley A.M."/>
            <person name="King A."/>
            <person name="Laird G.K."/>
            <person name="Langford C."/>
            <person name="Lawlor S."/>
            <person name="Leongamornlert D.A."/>
            <person name="Leversha M."/>
            <person name="Lloyd C.R."/>
            <person name="Lloyd D.M."/>
            <person name="Loveland J.E."/>
            <person name="Lovell J."/>
            <person name="Martin S."/>
            <person name="Mashreghi-Mohammadi M."/>
            <person name="Maslen G.L."/>
            <person name="Matthews L."/>
            <person name="McCann O.T."/>
            <person name="McLaren S.J."/>
            <person name="McLay K."/>
            <person name="McMurray A."/>
            <person name="Moore M.J.F."/>
            <person name="Mullikin J.C."/>
            <person name="Niblett D."/>
            <person name="Nickerson T."/>
            <person name="Novik K.L."/>
            <person name="Oliver K."/>
            <person name="Overton-Larty E.K."/>
            <person name="Parker A."/>
            <person name="Patel R."/>
            <person name="Pearce A.V."/>
            <person name="Peck A.I."/>
            <person name="Phillimore B.J.C.T."/>
            <person name="Phillips S."/>
            <person name="Plumb R.W."/>
            <person name="Porter K.M."/>
            <person name="Ramsey Y."/>
            <person name="Ranby S.A."/>
            <person name="Rice C.M."/>
            <person name="Ross M.T."/>
            <person name="Searle S.M."/>
            <person name="Sehra H.K."/>
            <person name="Sheridan E."/>
            <person name="Skuce C.D."/>
            <person name="Smith S."/>
            <person name="Smith M."/>
            <person name="Spraggon L."/>
            <person name="Squares S.L."/>
            <person name="Steward C.A."/>
            <person name="Sycamore N."/>
            <person name="Tamlyn-Hall G."/>
            <person name="Tester J."/>
            <person name="Theaker A.J."/>
            <person name="Thomas D.W."/>
            <person name="Thorpe A."/>
            <person name="Tracey A."/>
            <person name="Tromans A."/>
            <person name="Tubby B."/>
            <person name="Wall M."/>
            <person name="Wallis J.M."/>
            <person name="West A.P."/>
            <person name="White S.S."/>
            <person name="Whitehead S.L."/>
            <person name="Whittaker H."/>
            <person name="Wild A."/>
            <person name="Willey D.J."/>
            <person name="Wilmer T.E."/>
            <person name="Wood J.M."/>
            <person name="Wray P.W."/>
            <person name="Wyatt J.C."/>
            <person name="Young L."/>
            <person name="Younger R.M."/>
            <person name="Bentley D.R."/>
            <person name="Coulson A."/>
            <person name="Durbin R.M."/>
            <person name="Hubbard T."/>
            <person name="Sulston J.E."/>
            <person name="Dunham I."/>
            <person name="Rogers J."/>
            <person name="Beck S."/>
        </authorList>
    </citation>
    <scope>NUCLEOTIDE SEQUENCE [LARGE SCALE GENOMIC DNA]</scope>
</reference>
<reference key="8">
    <citation type="submission" date="2005-07" db="EMBL/GenBank/DDBJ databases">
        <authorList>
            <person name="Mural R.J."/>
            <person name="Istrail S."/>
            <person name="Sutton G.G."/>
            <person name="Florea L."/>
            <person name="Halpern A.L."/>
            <person name="Mobarry C.M."/>
            <person name="Lippert R."/>
            <person name="Walenz B."/>
            <person name="Shatkay H."/>
            <person name="Dew I."/>
            <person name="Miller J.R."/>
            <person name="Flanigan M.J."/>
            <person name="Edwards N.J."/>
            <person name="Bolanos R."/>
            <person name="Fasulo D."/>
            <person name="Halldorsson B.V."/>
            <person name="Hannenhalli S."/>
            <person name="Turner R."/>
            <person name="Yooseph S."/>
            <person name="Lu F."/>
            <person name="Nusskern D.R."/>
            <person name="Shue B.C."/>
            <person name="Zheng X.H."/>
            <person name="Zhong F."/>
            <person name="Delcher A.L."/>
            <person name="Huson D.H."/>
            <person name="Kravitz S.A."/>
            <person name="Mouchard L."/>
            <person name="Reinert K."/>
            <person name="Remington K.A."/>
            <person name="Clark A.G."/>
            <person name="Waterman M.S."/>
            <person name="Eichler E.E."/>
            <person name="Adams M.D."/>
            <person name="Hunkapiller M.W."/>
            <person name="Myers E.W."/>
            <person name="Venter J.C."/>
        </authorList>
    </citation>
    <scope>NUCLEOTIDE SEQUENCE [LARGE SCALE GENOMIC DNA]</scope>
    <scope>VARIANT ALA-259</scope>
</reference>
<reference key="9">
    <citation type="journal article" date="2004" name="Genome Res.">
        <title>The status, quality, and expansion of the NIH full-length cDNA project: the Mammalian Gene Collection (MGC).</title>
        <authorList>
            <consortium name="The MGC Project Team"/>
        </authorList>
    </citation>
    <scope>NUCLEOTIDE SEQUENCE [LARGE SCALE MRNA] (ISOFORM 1)</scope>
    <source>
        <tissue>Lung</tissue>
    </source>
</reference>
<reference key="10">
    <citation type="journal article" date="1992" name="Genomics">
        <title>Genomic organization, chromosomal localization, and independent expression of human cyclin D genes.</title>
        <authorList>
            <person name="Inaba T."/>
            <person name="Matsushime H."/>
            <person name="Valentine M."/>
            <person name="Roussel M.F."/>
            <person name="Sherr C.J."/>
            <person name="Look A.T."/>
        </authorList>
    </citation>
    <scope>NUCLEOTIDE SEQUENCE [GENOMIC DNA] OF 52-237</scope>
    <source>
        <tissue>Placenta</tissue>
    </source>
</reference>
<reference key="11">
    <citation type="journal article" date="1994" name="Mol. Cell. Biol.">
        <title>Identification of G1 kinase activity for cdk6, a novel cyclin D partner.</title>
        <authorList>
            <person name="Meyerson M."/>
            <person name="Harlow E."/>
        </authorList>
    </citation>
    <scope>FUNCTION</scope>
    <scope>INTERACTION WITH CDK6</scope>
</reference>
<reference key="12">
    <citation type="journal article" date="1997" name="Genes Dev.">
        <title>New functional activities for the p21 family of CDK inhibitors.</title>
        <authorList>
            <person name="LaBaer J."/>
            <person name="Garrett M.D."/>
            <person name="Stevenson L.F."/>
            <person name="Slingerland J.M."/>
            <person name="Sandhu C."/>
            <person name="Chou H.S."/>
            <person name="Fattaey A."/>
            <person name="Harlow E."/>
        </authorList>
    </citation>
    <scope>INTERACTION WITH CDK4 AND CDKN1A</scope>
</reference>
<reference key="13">
    <citation type="journal article" date="2004" name="Biochem. Biophys. Res. Commun.">
        <title>Cyclin D3 interacts with human activating transcription factor 5 and potentiates its transcription activity.</title>
        <authorList>
            <person name="Liu W."/>
            <person name="Sun M."/>
            <person name="Jiang J."/>
            <person name="Shen X."/>
            <person name="Sun Q."/>
            <person name="Liu W."/>
            <person name="Shen H."/>
            <person name="Gu J."/>
        </authorList>
    </citation>
    <scope>INTERACTION WITH ATF5</scope>
    <scope>FUNCTION</scope>
    <scope>SUBCELLULAR LOCATION</scope>
</reference>
<reference key="14">
    <citation type="journal article" date="2004" name="FEBS Lett.">
        <title>Identification of the p28 subunit of eukaryotic initiation factor 3(eIF3k) as a new interaction partner of cyclin D3.</title>
        <authorList>
            <person name="Shen X."/>
            <person name="Yang Y."/>
            <person name="Liu W."/>
            <person name="Sun M."/>
            <person name="Jiang J."/>
            <person name="Zong H."/>
            <person name="Gu J."/>
        </authorList>
    </citation>
    <scope>INTERACTION WITH EIF3K</scope>
</reference>
<reference key="15">
    <citation type="journal article" date="2006" name="Mol. Cell. Biol.">
        <title>Regulated activating Thr172 phosphorylation of cyclin-dependent kinase 4(CDK4): its relationship with cyclins and CDK 'inhibitors'.</title>
        <authorList>
            <person name="Bockstaele L."/>
            <person name="Kooken H."/>
            <person name="Libert F."/>
            <person name="Paternot S."/>
            <person name="Dumont J.E."/>
            <person name="de Launoit Y."/>
            <person name="Roger P.P."/>
            <person name="Coulonval K."/>
        </authorList>
    </citation>
    <scope>INTERACTION WITH CDK4; CDKN2A AND CDKN1B</scope>
</reference>
<reference key="16">
    <citation type="journal article" date="2008" name="Proc. Natl. Acad. Sci. U.S.A.">
        <title>A quantitative atlas of mitotic phosphorylation.</title>
        <authorList>
            <person name="Dephoure N."/>
            <person name="Zhou C."/>
            <person name="Villen J."/>
            <person name="Beausoleil S.A."/>
            <person name="Bakalarski C.E."/>
            <person name="Elledge S.J."/>
            <person name="Gygi S.P."/>
        </authorList>
    </citation>
    <scope>IDENTIFICATION BY MASS SPECTROMETRY [LARGE SCALE ANALYSIS]</scope>
    <source>
        <tissue>Cervix carcinoma</tissue>
    </source>
</reference>
<reference key="17">
    <citation type="journal article" date="2009" name="Sci. Signal.">
        <title>Quantitative phosphoproteomic analysis of T cell receptor signaling reveals system-wide modulation of protein-protein interactions.</title>
        <authorList>
            <person name="Mayya V."/>
            <person name="Lundgren D.H."/>
            <person name="Hwang S.-I."/>
            <person name="Rezaul K."/>
            <person name="Wu L."/>
            <person name="Eng J.K."/>
            <person name="Rodionov V."/>
            <person name="Han D.K."/>
        </authorList>
    </citation>
    <scope>PHOSPHORYLATION [LARGE SCALE ANALYSIS] AT SER-279</scope>
    <scope>IDENTIFICATION BY MASS SPECTROMETRY [LARGE SCALE ANALYSIS]</scope>
    <source>
        <tissue>Leukemic T-cell</tissue>
    </source>
</reference>
<reference key="18">
    <citation type="journal article" date="2012" name="Oncogene">
        <title>F-box protein FBXL2 exerts human lung tumor suppressor-like activity by ubiquitin-mediated degradation of cyclin D3 resulting in cell cycle arrest.</title>
        <authorList>
            <person name="Chen B.B."/>
            <person name="Glasser J.R."/>
            <person name="Coon T.A."/>
            <person name="Mallampalli R.K."/>
        </authorList>
    </citation>
    <scope>UBIQUITINATION BY SCF(FBXL2)</scope>
</reference>
<reference key="19">
    <citation type="journal article" date="2012" name="Proc. Natl. Acad. Sci. U.S.A.">
        <title>N-terminal acetylome analyses and functional insights of the N-terminal acetyltransferase NatB.</title>
        <authorList>
            <person name="Van Damme P."/>
            <person name="Lasa M."/>
            <person name="Polevoda B."/>
            <person name="Gazquez C."/>
            <person name="Elosegui-Artola A."/>
            <person name="Kim D.S."/>
            <person name="De Juan-Pardo E."/>
            <person name="Demeyer K."/>
            <person name="Hole K."/>
            <person name="Larrea E."/>
            <person name="Timmerman E."/>
            <person name="Prieto J."/>
            <person name="Arnesen T."/>
            <person name="Sherman F."/>
            <person name="Gevaert K."/>
            <person name="Aldabe R."/>
        </authorList>
    </citation>
    <scope>IDENTIFICATION BY MASS SPECTROMETRY [LARGE SCALE ANALYSIS]</scope>
</reference>
<reference key="20">
    <citation type="journal article" date="2013" name="J. Proteome Res.">
        <title>Toward a comprehensive characterization of a human cancer cell phosphoproteome.</title>
        <authorList>
            <person name="Zhou H."/>
            <person name="Di Palma S."/>
            <person name="Preisinger C."/>
            <person name="Peng M."/>
            <person name="Polat A.N."/>
            <person name="Heck A.J."/>
            <person name="Mohammed S."/>
        </authorList>
    </citation>
    <scope>IDENTIFICATION BY MASS SPECTROMETRY [LARGE SCALE ANALYSIS]</scope>
    <source>
        <tissue>Erythroleukemia</tissue>
    </source>
</reference>
<reference key="21">
    <citation type="journal article" date="2021" name="Nature">
        <title>CRL4AMBRA1 is a master regulator of D-type cyclins.</title>
        <authorList>
            <person name="Simoneschi D."/>
            <person name="Rona G."/>
            <person name="Zhou N."/>
            <person name="Jeong Y.T."/>
            <person name="Jiang S."/>
            <person name="Milletti G."/>
            <person name="Arbini A.A."/>
            <person name="O'Sullivan A."/>
            <person name="Wang A.A."/>
            <person name="Nithikasem S."/>
            <person name="Keegan S."/>
            <person name="Siu Y."/>
            <person name="Cianfanelli V."/>
            <person name="Maiani E."/>
            <person name="Nazio F."/>
            <person name="Cecconi F."/>
            <person name="Boccalatte F."/>
            <person name="Fenyoe D."/>
            <person name="Jones D.R."/>
            <person name="Busino L."/>
            <person name="Pagano M."/>
        </authorList>
    </citation>
    <scope>UBIQUITINATION</scope>
</reference>
<reference key="22">
    <citation type="journal article" date="2021" name="Nature">
        <title>The AMBRA1 E3 ligase adaptor regulates the stability of cyclin D.</title>
        <authorList>
            <person name="Chaikovsky A.C."/>
            <person name="Li C."/>
            <person name="Jeng E.E."/>
            <person name="Loebell S."/>
            <person name="Lee M.C."/>
            <person name="Murray C.W."/>
            <person name="Cheng R."/>
            <person name="Demeter J."/>
            <person name="Swaney D.L."/>
            <person name="Chen S.H."/>
            <person name="Newton B.W."/>
            <person name="Johnson J.R."/>
            <person name="Drainas A.P."/>
            <person name="Shue Y.T."/>
            <person name="Seoane J.A."/>
            <person name="Srinivasan P."/>
            <person name="He A."/>
            <person name="Yoshida A."/>
            <person name="Hipkins S.Q."/>
            <person name="McCrea E."/>
            <person name="Poltorack C.D."/>
            <person name="Krogan N.J."/>
            <person name="Diehl J.A."/>
            <person name="Kong C."/>
            <person name="Jackson P.K."/>
            <person name="Curtis C."/>
            <person name="Petrov D.A."/>
            <person name="Bassik M.C."/>
            <person name="Winslow M.M."/>
            <person name="Sage J."/>
        </authorList>
    </citation>
    <scope>UBIQUITINATION</scope>
</reference>
<reference key="23">
    <citation type="journal article" date="2009" name="Proc. Natl. Acad. Sci. U.S.A.">
        <title>The structure of CDK4/cyclin D3 has implications for models of CDK activation.</title>
        <authorList>
            <person name="Takaki T."/>
            <person name="Echalier A."/>
            <person name="Brown N.R."/>
            <person name="Hunt T."/>
            <person name="Endicott J.A."/>
            <person name="Noble M.E."/>
        </authorList>
    </citation>
    <scope>X-RAY CRYSTALLOGRAPHY (3.0 ANGSTROMS) IN COMPLEX WITH CDK4</scope>
</reference>
<proteinExistence type="evidence at protein level"/>
<dbReference type="EMBL" id="M90814">
    <property type="protein sequence ID" value="AAA51927.1"/>
    <property type="molecule type" value="mRNA"/>
</dbReference>
<dbReference type="EMBL" id="M92287">
    <property type="protein sequence ID" value="AAA52137.1"/>
    <property type="molecule type" value="mRNA"/>
</dbReference>
<dbReference type="EMBL" id="AF517525">
    <property type="protein sequence ID" value="AAM51826.1"/>
    <property type="molecule type" value="Genomic_DNA"/>
</dbReference>
<dbReference type="EMBL" id="BX400719">
    <property type="status" value="NOT_ANNOTATED_CDS"/>
    <property type="molecule type" value="mRNA"/>
</dbReference>
<dbReference type="EMBL" id="AK057206">
    <property type="protein sequence ID" value="BAG51884.1"/>
    <property type="molecule type" value="mRNA"/>
</dbReference>
<dbReference type="EMBL" id="AK097856">
    <property type="status" value="NOT_ANNOTATED_CDS"/>
    <property type="molecule type" value="mRNA"/>
</dbReference>
<dbReference type="EMBL" id="AK315421">
    <property type="protein sequence ID" value="BAG37810.1"/>
    <property type="molecule type" value="mRNA"/>
</dbReference>
<dbReference type="EMBL" id="CR542246">
    <property type="protein sequence ID" value="CAG47042.1"/>
    <property type="molecule type" value="mRNA"/>
</dbReference>
<dbReference type="EMBL" id="AL160163">
    <property type="status" value="NOT_ANNOTATED_CDS"/>
    <property type="molecule type" value="Genomic_DNA"/>
</dbReference>
<dbReference type="EMBL" id="AL513008">
    <property type="status" value="NOT_ANNOTATED_CDS"/>
    <property type="molecule type" value="Genomic_DNA"/>
</dbReference>
<dbReference type="EMBL" id="CH471081">
    <property type="protein sequence ID" value="EAX04071.1"/>
    <property type="molecule type" value="Genomic_DNA"/>
</dbReference>
<dbReference type="EMBL" id="BC011616">
    <property type="protein sequence ID" value="AAH11616.1"/>
    <property type="molecule type" value="mRNA"/>
</dbReference>
<dbReference type="EMBL" id="M88087">
    <property type="protein sequence ID" value="AAA51929.1"/>
    <property type="molecule type" value="Genomic_DNA"/>
</dbReference>
<dbReference type="EMBL" id="M88084">
    <property type="protein sequence ID" value="AAA51929.1"/>
    <property type="status" value="JOINED"/>
    <property type="molecule type" value="Genomic_DNA"/>
</dbReference>
<dbReference type="EMBL" id="M88085">
    <property type="protein sequence ID" value="AAA51929.1"/>
    <property type="status" value="JOINED"/>
    <property type="molecule type" value="Genomic_DNA"/>
</dbReference>
<dbReference type="EMBL" id="M88086">
    <property type="protein sequence ID" value="AAA51929.1"/>
    <property type="status" value="JOINED"/>
    <property type="molecule type" value="Genomic_DNA"/>
</dbReference>
<dbReference type="CCDS" id="CCDS47425.1">
    <molecule id="P30281-3"/>
</dbReference>
<dbReference type="CCDS" id="CCDS47426.1">
    <molecule id="P30281-2"/>
</dbReference>
<dbReference type="CCDS" id="CCDS47427.1">
    <molecule id="P30281-4"/>
</dbReference>
<dbReference type="CCDS" id="CCDS4863.1">
    <molecule id="P30281-1"/>
</dbReference>
<dbReference type="PIR" id="B42822">
    <property type="entry name" value="B42822"/>
</dbReference>
<dbReference type="RefSeq" id="NP_001129489.1">
    <molecule id="P30281-2"/>
    <property type="nucleotide sequence ID" value="NM_001136017.3"/>
</dbReference>
<dbReference type="RefSeq" id="NP_001129597.1">
    <molecule id="P30281-3"/>
    <property type="nucleotide sequence ID" value="NM_001136125.3"/>
</dbReference>
<dbReference type="RefSeq" id="NP_001129598.1">
    <molecule id="P30281-4"/>
    <property type="nucleotide sequence ID" value="NM_001136126.3"/>
</dbReference>
<dbReference type="RefSeq" id="NP_001274356.1">
    <property type="nucleotide sequence ID" value="NM_001287427.1"/>
</dbReference>
<dbReference type="RefSeq" id="NP_001274363.1">
    <molecule id="P30281-4"/>
    <property type="nucleotide sequence ID" value="NM_001287434.2"/>
</dbReference>
<dbReference type="RefSeq" id="NP_001410982.1">
    <molecule id="P30281-2"/>
    <property type="nucleotide sequence ID" value="NM_001424053.1"/>
</dbReference>
<dbReference type="RefSeq" id="NP_001410984.1">
    <molecule id="P30281-2"/>
    <property type="nucleotide sequence ID" value="NM_001424055.1"/>
</dbReference>
<dbReference type="RefSeq" id="NP_001410985.1">
    <molecule id="P30281-4"/>
    <property type="nucleotide sequence ID" value="NM_001424056.1"/>
</dbReference>
<dbReference type="RefSeq" id="NP_001410986.1">
    <molecule id="P30281-4"/>
    <property type="nucleotide sequence ID" value="NM_001424057.1"/>
</dbReference>
<dbReference type="RefSeq" id="NP_001751.1">
    <molecule id="P30281-1"/>
    <property type="nucleotide sequence ID" value="NM_001760.5"/>
</dbReference>
<dbReference type="PDB" id="3G33">
    <property type="method" value="X-ray"/>
    <property type="resolution" value="3.00 A"/>
    <property type="chains" value="B/D=1-292"/>
</dbReference>
<dbReference type="PDB" id="7SJ3">
    <property type="method" value="X-ray"/>
    <property type="resolution" value="2.51 A"/>
    <property type="chains" value="B=1-259"/>
</dbReference>
<dbReference type="PDBsum" id="3G33"/>
<dbReference type="PDBsum" id="7SJ3"/>
<dbReference type="SMR" id="P30281"/>
<dbReference type="BioGRID" id="107336">
    <property type="interactions" value="97"/>
</dbReference>
<dbReference type="ComplexPortal" id="CPX-2012">
    <property type="entry name" value="Cyclin D3-CDK4 complex"/>
</dbReference>
<dbReference type="ComplexPortal" id="CPX-2013">
    <property type="entry name" value="Cyclin D3-CDK6 complex"/>
</dbReference>
<dbReference type="CORUM" id="P30281"/>
<dbReference type="DIP" id="DIP-31734N"/>
<dbReference type="FunCoup" id="P30281">
    <property type="interactions" value="1644"/>
</dbReference>
<dbReference type="IntAct" id="P30281">
    <property type="interactions" value="56"/>
</dbReference>
<dbReference type="MINT" id="P30281"/>
<dbReference type="STRING" id="9606.ENSP00000362082"/>
<dbReference type="BindingDB" id="P30281"/>
<dbReference type="ChEMBL" id="CHEMBL2422"/>
<dbReference type="iPTMnet" id="P30281"/>
<dbReference type="PhosphoSitePlus" id="P30281"/>
<dbReference type="BioMuta" id="CCND3"/>
<dbReference type="DMDM" id="20981685"/>
<dbReference type="CPTAC" id="CPTAC-2808"/>
<dbReference type="CPTAC" id="CPTAC-2809"/>
<dbReference type="jPOST" id="P30281"/>
<dbReference type="MassIVE" id="P30281"/>
<dbReference type="PaxDb" id="9606-ENSP00000362082"/>
<dbReference type="PeptideAtlas" id="P30281"/>
<dbReference type="ProteomicsDB" id="19071"/>
<dbReference type="ProteomicsDB" id="19134"/>
<dbReference type="ProteomicsDB" id="54648">
    <molecule id="P30281-1"/>
</dbReference>
<dbReference type="ProteomicsDB" id="54649">
    <molecule id="P30281-2"/>
</dbReference>
<dbReference type="Pumba" id="P30281"/>
<dbReference type="Antibodypedia" id="3521">
    <property type="antibodies" value="822 antibodies from 45 providers"/>
</dbReference>
<dbReference type="DNASU" id="896"/>
<dbReference type="Ensembl" id="ENST00000372988.8">
    <molecule id="P30281-2"/>
    <property type="protein sequence ID" value="ENSP00000362079.4"/>
    <property type="gene ID" value="ENSG00000112576.13"/>
</dbReference>
<dbReference type="Ensembl" id="ENST00000372991.9">
    <molecule id="P30281-1"/>
    <property type="protein sequence ID" value="ENSP00000362082.5"/>
    <property type="gene ID" value="ENSG00000112576.13"/>
</dbReference>
<dbReference type="Ensembl" id="ENST00000414200.6">
    <molecule id="P30281-3"/>
    <property type="protein sequence ID" value="ENSP00000397545.2"/>
    <property type="gene ID" value="ENSG00000112576.13"/>
</dbReference>
<dbReference type="Ensembl" id="ENST00000415497.6">
    <molecule id="P30281-4"/>
    <property type="protein sequence ID" value="ENSP00000401595.2"/>
    <property type="gene ID" value="ENSG00000112576.13"/>
</dbReference>
<dbReference type="Ensembl" id="ENST00000511642.5">
    <molecule id="P30281-2"/>
    <property type="protein sequence ID" value="ENSP00000426212.1"/>
    <property type="gene ID" value="ENSG00000112576.13"/>
</dbReference>
<dbReference type="Ensembl" id="ENST00000616010.4">
    <molecule id="P30281-4"/>
    <property type="protein sequence ID" value="ENSP00000484424.1"/>
    <property type="gene ID" value="ENSG00000112576.13"/>
</dbReference>
<dbReference type="GeneID" id="896"/>
<dbReference type="KEGG" id="hsa:896"/>
<dbReference type="MANE-Select" id="ENST00000372991.9">
    <property type="protein sequence ID" value="ENSP00000362082.5"/>
    <property type="RefSeq nucleotide sequence ID" value="NM_001760.5"/>
    <property type="RefSeq protein sequence ID" value="NP_001751.1"/>
</dbReference>
<dbReference type="UCSC" id="uc003orn.4">
    <molecule id="P30281-1"/>
    <property type="organism name" value="human"/>
</dbReference>
<dbReference type="AGR" id="HGNC:1585"/>
<dbReference type="CTD" id="896"/>
<dbReference type="DisGeNET" id="896"/>
<dbReference type="GeneCards" id="CCND3"/>
<dbReference type="HGNC" id="HGNC:1585">
    <property type="gene designation" value="CCND3"/>
</dbReference>
<dbReference type="HPA" id="ENSG00000112576">
    <property type="expression patterns" value="Tissue enhanced (lymphoid)"/>
</dbReference>
<dbReference type="MalaCards" id="CCND3"/>
<dbReference type="MIM" id="123834">
    <property type="type" value="gene"/>
</dbReference>
<dbReference type="neXtProt" id="NX_P30281"/>
<dbReference type="OpenTargets" id="ENSG00000112576"/>
<dbReference type="PharmGKB" id="PA26152"/>
<dbReference type="VEuPathDB" id="HostDB:ENSG00000112576"/>
<dbReference type="eggNOG" id="KOG0656">
    <property type="taxonomic scope" value="Eukaryota"/>
</dbReference>
<dbReference type="GeneTree" id="ENSGT00940000160743"/>
<dbReference type="HOGENOM" id="CLU_052190_0_0_1"/>
<dbReference type="InParanoid" id="P30281"/>
<dbReference type="OMA" id="KEIKPYM"/>
<dbReference type="OrthoDB" id="306099at2759"/>
<dbReference type="PAN-GO" id="P30281">
    <property type="GO annotations" value="7 GO annotations based on evolutionary models"/>
</dbReference>
<dbReference type="PhylomeDB" id="P30281"/>
<dbReference type="TreeFam" id="TF101004"/>
<dbReference type="PathwayCommons" id="P30281"/>
<dbReference type="Reactome" id="R-HSA-381340">
    <property type="pathway name" value="Transcriptional regulation of white adipocyte differentiation"/>
</dbReference>
<dbReference type="Reactome" id="R-HSA-5687128">
    <property type="pathway name" value="MAPK6/MAPK4 signaling"/>
</dbReference>
<dbReference type="Reactome" id="R-HSA-69231">
    <property type="pathway name" value="Cyclin D associated events in G1"/>
</dbReference>
<dbReference type="Reactome" id="R-HSA-8934593">
    <property type="pathway name" value="Regulation of RUNX1 Expression and Activity"/>
</dbReference>
<dbReference type="Reactome" id="R-HSA-9661069">
    <property type="pathway name" value="Defective binding of RB1 mutants to E2F1,(E2F2, E2F3)"/>
</dbReference>
<dbReference type="Reactome" id="R-HSA-9754119">
    <property type="pathway name" value="Drug-mediated inhibition of CDK4/CDK6 activity"/>
</dbReference>
<dbReference type="SignaLink" id="P30281"/>
<dbReference type="SIGNOR" id="P30281"/>
<dbReference type="BioGRID-ORCS" id="896">
    <property type="hits" value="94 hits in 1180 CRISPR screens"/>
</dbReference>
<dbReference type="ChiTaRS" id="CCND3">
    <property type="organism name" value="human"/>
</dbReference>
<dbReference type="EvolutionaryTrace" id="P30281"/>
<dbReference type="GeneWiki" id="Cyclin_D3"/>
<dbReference type="GenomeRNAi" id="896"/>
<dbReference type="Pharos" id="P30281">
    <property type="development level" value="Tchem"/>
</dbReference>
<dbReference type="PRO" id="PR:P30281"/>
<dbReference type="Proteomes" id="UP000005640">
    <property type="component" value="Chromosome 6"/>
</dbReference>
<dbReference type="RNAct" id="P30281">
    <property type="molecule type" value="protein"/>
</dbReference>
<dbReference type="Bgee" id="ENSG00000112576">
    <property type="expression patterns" value="Expressed in granulocyte and 205 other cell types or tissues"/>
</dbReference>
<dbReference type="ExpressionAtlas" id="P30281">
    <property type="expression patterns" value="baseline and differential"/>
</dbReference>
<dbReference type="GO" id="GO:0097130">
    <property type="term" value="C:cyclin D3-CDK4 complex"/>
    <property type="evidence" value="ECO:0000353"/>
    <property type="project" value="ComplexPortal"/>
</dbReference>
<dbReference type="GO" id="GO:0097133">
    <property type="term" value="C:cyclin D3-CDK6 complex"/>
    <property type="evidence" value="ECO:0000353"/>
    <property type="project" value="ComplexPortal"/>
</dbReference>
<dbReference type="GO" id="GO:0000307">
    <property type="term" value="C:cyclin-dependent protein kinase holoenzyme complex"/>
    <property type="evidence" value="ECO:0000314"/>
    <property type="project" value="BHF-UCL"/>
</dbReference>
<dbReference type="GO" id="GO:0005737">
    <property type="term" value="C:cytoplasm"/>
    <property type="evidence" value="ECO:0000318"/>
    <property type="project" value="GO_Central"/>
</dbReference>
<dbReference type="GO" id="GO:0005829">
    <property type="term" value="C:cytosol"/>
    <property type="evidence" value="ECO:0000304"/>
    <property type="project" value="Reactome"/>
</dbReference>
<dbReference type="GO" id="GO:0005815">
    <property type="term" value="C:microtubule organizing center"/>
    <property type="evidence" value="ECO:0000318"/>
    <property type="project" value="GO_Central"/>
</dbReference>
<dbReference type="GO" id="GO:0005654">
    <property type="term" value="C:nucleoplasm"/>
    <property type="evidence" value="ECO:0000314"/>
    <property type="project" value="HPA"/>
</dbReference>
<dbReference type="GO" id="GO:0005634">
    <property type="term" value="C:nucleus"/>
    <property type="evidence" value="ECO:0000318"/>
    <property type="project" value="GO_Central"/>
</dbReference>
<dbReference type="GO" id="GO:0061575">
    <property type="term" value="F:cyclin-dependent protein serine/threonine kinase activator activity"/>
    <property type="evidence" value="ECO:0000314"/>
    <property type="project" value="UniProt"/>
</dbReference>
<dbReference type="GO" id="GO:0004693">
    <property type="term" value="F:cyclin-dependent protein serine/threonine kinase activity"/>
    <property type="evidence" value="ECO:0007669"/>
    <property type="project" value="Ensembl"/>
</dbReference>
<dbReference type="GO" id="GO:0016538">
    <property type="term" value="F:cyclin-dependent protein serine/threonine kinase regulator activity"/>
    <property type="evidence" value="ECO:0000318"/>
    <property type="project" value="GO_Central"/>
</dbReference>
<dbReference type="GO" id="GO:0019901">
    <property type="term" value="F:protein kinase binding"/>
    <property type="evidence" value="ECO:0000353"/>
    <property type="project" value="BHF-UCL"/>
</dbReference>
<dbReference type="GO" id="GO:0043539">
    <property type="term" value="F:protein serine/threonine kinase activator activity"/>
    <property type="evidence" value="ECO:0000314"/>
    <property type="project" value="BHF-UCL"/>
</dbReference>
<dbReference type="GO" id="GO:0051301">
    <property type="term" value="P:cell division"/>
    <property type="evidence" value="ECO:0007669"/>
    <property type="project" value="UniProtKB-KW"/>
</dbReference>
<dbReference type="GO" id="GO:0000082">
    <property type="term" value="P:G1/S transition of mitotic cell cycle"/>
    <property type="evidence" value="ECO:0000314"/>
    <property type="project" value="UniProt"/>
</dbReference>
<dbReference type="GO" id="GO:0000122">
    <property type="term" value="P:negative regulation of transcription by RNA polymerase II"/>
    <property type="evidence" value="ECO:0007669"/>
    <property type="project" value="Ensembl"/>
</dbReference>
<dbReference type="GO" id="GO:1900087">
    <property type="term" value="P:positive regulation of G1/S transition of mitotic cell cycle"/>
    <property type="evidence" value="ECO:0000318"/>
    <property type="project" value="GO_Central"/>
</dbReference>
<dbReference type="GO" id="GO:0042127">
    <property type="term" value="P:regulation of cell population proliferation"/>
    <property type="evidence" value="ECO:0007669"/>
    <property type="project" value="Ensembl"/>
</dbReference>
<dbReference type="GO" id="GO:0007165">
    <property type="term" value="P:signal transduction"/>
    <property type="evidence" value="ECO:0007669"/>
    <property type="project" value="Ensembl"/>
</dbReference>
<dbReference type="GO" id="GO:0042098">
    <property type="term" value="P:T cell proliferation"/>
    <property type="evidence" value="ECO:0007669"/>
    <property type="project" value="Ensembl"/>
</dbReference>
<dbReference type="CDD" id="cd20575">
    <property type="entry name" value="CYCLIN_CCND3_rpt1"/>
    <property type="match status" value="1"/>
</dbReference>
<dbReference type="CDD" id="cd20578">
    <property type="entry name" value="CYCLIN_CCND3_rpt2"/>
    <property type="match status" value="1"/>
</dbReference>
<dbReference type="DisProt" id="DP01447"/>
<dbReference type="FunFam" id="1.10.472.10:FF:000012">
    <property type="entry name" value="G1/S-specific cyclin-D1"/>
    <property type="match status" value="1"/>
</dbReference>
<dbReference type="FunFam" id="1.10.472.10:FF:000096">
    <property type="entry name" value="G1/S-specific cyclin-D3 isoform X2"/>
    <property type="match status" value="1"/>
</dbReference>
<dbReference type="Gene3D" id="1.10.472.10">
    <property type="entry name" value="Cyclin-like"/>
    <property type="match status" value="2"/>
</dbReference>
<dbReference type="InterPro" id="IPR039361">
    <property type="entry name" value="Cyclin"/>
</dbReference>
<dbReference type="InterPro" id="IPR013763">
    <property type="entry name" value="Cyclin-like_dom"/>
</dbReference>
<dbReference type="InterPro" id="IPR036915">
    <property type="entry name" value="Cyclin-like_sf"/>
</dbReference>
<dbReference type="InterPro" id="IPR004367">
    <property type="entry name" value="Cyclin_C-dom"/>
</dbReference>
<dbReference type="InterPro" id="IPR006671">
    <property type="entry name" value="Cyclin_N"/>
</dbReference>
<dbReference type="InterPro" id="IPR048258">
    <property type="entry name" value="Cyclins_cyclin-box"/>
</dbReference>
<dbReference type="PANTHER" id="PTHR10177">
    <property type="entry name" value="CYCLINS"/>
    <property type="match status" value="1"/>
</dbReference>
<dbReference type="Pfam" id="PF02984">
    <property type="entry name" value="Cyclin_C"/>
    <property type="match status" value="1"/>
</dbReference>
<dbReference type="Pfam" id="PF00134">
    <property type="entry name" value="Cyclin_N"/>
    <property type="match status" value="1"/>
</dbReference>
<dbReference type="SMART" id="SM00385">
    <property type="entry name" value="CYCLIN"/>
    <property type="match status" value="1"/>
</dbReference>
<dbReference type="SMART" id="SM01332">
    <property type="entry name" value="Cyclin_C"/>
    <property type="match status" value="1"/>
</dbReference>
<dbReference type="SUPFAM" id="SSF47954">
    <property type="entry name" value="Cyclin-like"/>
    <property type="match status" value="2"/>
</dbReference>
<dbReference type="PROSITE" id="PS00292">
    <property type="entry name" value="CYCLINS"/>
    <property type="match status" value="1"/>
</dbReference>
<evidence type="ECO:0000250" key="1">
    <source>
        <dbReference type="UniProtKB" id="P24385"/>
    </source>
</evidence>
<evidence type="ECO:0000250" key="2">
    <source>
        <dbReference type="UniProtKB" id="P30282"/>
    </source>
</evidence>
<evidence type="ECO:0000256" key="3">
    <source>
        <dbReference type="SAM" id="MobiDB-lite"/>
    </source>
</evidence>
<evidence type="ECO:0000269" key="4">
    <source>
    </source>
</evidence>
<evidence type="ECO:0000269" key="5">
    <source>
    </source>
</evidence>
<evidence type="ECO:0000269" key="6">
    <source>
    </source>
</evidence>
<evidence type="ECO:0000269" key="7">
    <source>
    </source>
</evidence>
<evidence type="ECO:0000269" key="8">
    <source>
    </source>
</evidence>
<evidence type="ECO:0000269" key="9">
    <source>
    </source>
</evidence>
<evidence type="ECO:0000269" key="10">
    <source>
    </source>
</evidence>
<evidence type="ECO:0000269" key="11">
    <source>
    </source>
</evidence>
<evidence type="ECO:0000269" key="12">
    <source>
    </source>
</evidence>
<evidence type="ECO:0000269" key="13">
    <source>
    </source>
</evidence>
<evidence type="ECO:0000269" key="14">
    <source>
    </source>
</evidence>
<evidence type="ECO:0000269" key="15">
    <source ref="3"/>
</evidence>
<evidence type="ECO:0000269" key="16">
    <source ref="4"/>
</evidence>
<evidence type="ECO:0000269" key="17">
    <source ref="6"/>
</evidence>
<evidence type="ECO:0000269" key="18">
    <source ref="8"/>
</evidence>
<evidence type="ECO:0000303" key="19">
    <source>
    </source>
</evidence>
<evidence type="ECO:0000303" key="20">
    <source>
    </source>
</evidence>
<evidence type="ECO:0000303" key="21">
    <source ref="4"/>
</evidence>
<evidence type="ECO:0000305" key="22"/>
<evidence type="ECO:0000312" key="23">
    <source>
        <dbReference type="HGNC" id="HGNC:1585"/>
    </source>
</evidence>
<evidence type="ECO:0007744" key="24">
    <source>
    </source>
</evidence>
<evidence type="ECO:0007829" key="25">
    <source>
        <dbReference type="PDB" id="3G33"/>
    </source>
</evidence>
<evidence type="ECO:0007829" key="26">
    <source>
        <dbReference type="PDB" id="7SJ3"/>
    </source>
</evidence>
<keyword id="KW-0002">3D-structure</keyword>
<keyword id="KW-0025">Alternative splicing</keyword>
<keyword id="KW-0131">Cell cycle</keyword>
<keyword id="KW-0132">Cell division</keyword>
<keyword id="KW-0195">Cyclin</keyword>
<keyword id="KW-0963">Cytoplasm</keyword>
<keyword id="KW-0539">Nucleus</keyword>
<keyword id="KW-0597">Phosphoprotein</keyword>
<keyword id="KW-1267">Proteomics identification</keyword>
<keyword id="KW-1185">Reference proteome</keyword>
<keyword id="KW-0804">Transcription</keyword>
<keyword id="KW-0805">Transcription regulation</keyword>
<keyword id="KW-0832">Ubl conjugation</keyword>
<organism>
    <name type="scientific">Homo sapiens</name>
    <name type="common">Human</name>
    <dbReference type="NCBI Taxonomy" id="9606"/>
    <lineage>
        <taxon>Eukaryota</taxon>
        <taxon>Metazoa</taxon>
        <taxon>Chordata</taxon>
        <taxon>Craniata</taxon>
        <taxon>Vertebrata</taxon>
        <taxon>Euteleostomi</taxon>
        <taxon>Mammalia</taxon>
        <taxon>Eutheria</taxon>
        <taxon>Euarchontoglires</taxon>
        <taxon>Primates</taxon>
        <taxon>Haplorrhini</taxon>
        <taxon>Catarrhini</taxon>
        <taxon>Hominidae</taxon>
        <taxon>Homo</taxon>
    </lineage>
</organism>
<accession>P30281</accession>
<accession>B2RD63</accession>
<accession>B3KQ22</accession>
<accession>E9PAS4</accession>
<accession>E9PB36</accession>
<accession>Q5T8J0</accession>
<accession>Q6FG62</accession>
<accession>Q96F49</accession>
<gene>
    <name evidence="19 23" type="primary">CCND3</name>
</gene>
<name>CCND3_HUMAN</name>
<feature type="chain" id="PRO_0000080442" description="G1/S-specific cyclin-D3">
    <location>
        <begin position="1"/>
        <end position="292"/>
    </location>
</feature>
<feature type="domain" description="Cyclin N-terminal">
    <location>
        <begin position="27"/>
        <end position="152"/>
    </location>
</feature>
<feature type="region of interest" description="Disordered" evidence="3">
    <location>
        <begin position="254"/>
        <end position="292"/>
    </location>
</feature>
<feature type="compositionally biased region" description="Low complexity" evidence="3">
    <location>
        <begin position="272"/>
        <end position="285"/>
    </location>
</feature>
<feature type="modified residue" description="Phosphoserine" evidence="2">
    <location>
        <position position="264"/>
    </location>
</feature>
<feature type="modified residue" description="Phosphoserine" evidence="24">
    <location>
        <position position="279"/>
    </location>
</feature>
<feature type="modified residue" description="Phosphothreonine" evidence="1">
    <location>
        <position position="283"/>
    </location>
</feature>
<feature type="splice variant" id="VSP_046266" description="In isoform 4." evidence="20">
    <location>
        <begin position="1"/>
        <end position="196"/>
    </location>
</feature>
<feature type="splice variant" id="VSP_042649" description="In isoform 2." evidence="20">
    <location>
        <begin position="1"/>
        <end position="81"/>
    </location>
</feature>
<feature type="splice variant" id="VSP_046267" description="In isoform 3." evidence="21">
    <location>
        <begin position="67"/>
        <end position="138"/>
    </location>
</feature>
<feature type="sequence variant" id="VAR_020412" description="In dbSNP:rs3218089.">
    <original>P</original>
    <variation>S</variation>
    <location>
        <position position="134"/>
    </location>
</feature>
<feature type="sequence variant" id="VAR_033726" description="In dbSNP:rs33966734.">
    <original>E</original>
    <variation>D</variation>
    <location>
        <position position="253"/>
    </location>
</feature>
<feature type="sequence variant" id="VAR_014205" description="In dbSNP:rs1051130." evidence="4 5 15 16 17 18">
    <original>S</original>
    <variation>A</variation>
    <location>
        <position position="259"/>
    </location>
</feature>
<feature type="helix" evidence="26">
    <location>
        <begin position="19"/>
        <end position="22"/>
    </location>
</feature>
<feature type="helix" evidence="26">
    <location>
        <begin position="25"/>
        <end position="35"/>
    </location>
</feature>
<feature type="helix" evidence="26">
    <location>
        <begin position="36"/>
        <end position="38"/>
    </location>
</feature>
<feature type="helix" evidence="26">
    <location>
        <begin position="44"/>
        <end position="47"/>
    </location>
</feature>
<feature type="turn" evidence="25">
    <location>
        <begin position="49"/>
        <end position="51"/>
    </location>
</feature>
<feature type="helix" evidence="26">
    <location>
        <begin position="54"/>
        <end position="70"/>
    </location>
</feature>
<feature type="helix" evidence="26">
    <location>
        <begin position="77"/>
        <end position="89"/>
    </location>
</feature>
<feature type="helix" evidence="26">
    <location>
        <begin position="96"/>
        <end position="98"/>
    </location>
</feature>
<feature type="helix" evidence="26">
    <location>
        <begin position="99"/>
        <end position="114"/>
    </location>
</feature>
<feature type="helix" evidence="26">
    <location>
        <begin position="121"/>
        <end position="127"/>
    </location>
</feature>
<feature type="turn" evidence="25">
    <location>
        <begin position="128"/>
        <end position="130"/>
    </location>
</feature>
<feature type="helix" evidence="26">
    <location>
        <begin position="134"/>
        <end position="147"/>
    </location>
</feature>
<feature type="turn" evidence="26">
    <location>
        <begin position="148"/>
        <end position="150"/>
    </location>
</feature>
<feature type="helix" evidence="26">
    <location>
        <begin position="158"/>
        <end position="166"/>
    </location>
</feature>
<feature type="turn" evidence="26">
    <location>
        <begin position="172"/>
        <end position="174"/>
    </location>
</feature>
<feature type="helix" evidence="26">
    <location>
        <begin position="175"/>
        <end position="191"/>
    </location>
</feature>
<feature type="helix" evidence="26">
    <location>
        <begin position="193"/>
        <end position="195"/>
    </location>
</feature>
<feature type="helix" evidence="26">
    <location>
        <begin position="200"/>
        <end position="215"/>
    </location>
</feature>
<feature type="helix" evidence="26">
    <location>
        <begin position="222"/>
        <end position="233"/>
    </location>
</feature>
<feature type="helix" evidence="26">
    <location>
        <begin position="237"/>
        <end position="252"/>
    </location>
</feature>